<gene>
    <name type="primary">gap</name>
    <name type="synonym">gapA</name>
    <name type="synonym">plr</name>
    <name type="ordered locus">SpyM3_0201</name>
</gene>
<keyword id="KW-0963">Cytoplasm</keyword>
<keyword id="KW-0324">Glycolysis</keyword>
<keyword id="KW-0520">NAD</keyword>
<keyword id="KW-0547">Nucleotide-binding</keyword>
<keyword id="KW-0560">Oxidoreductase</keyword>
<name>G3P_STRP3</name>
<organism>
    <name type="scientific">Streptococcus pyogenes serotype M3 (strain ATCC BAA-595 / MGAS315)</name>
    <dbReference type="NCBI Taxonomy" id="198466"/>
    <lineage>
        <taxon>Bacteria</taxon>
        <taxon>Bacillati</taxon>
        <taxon>Bacillota</taxon>
        <taxon>Bacilli</taxon>
        <taxon>Lactobacillales</taxon>
        <taxon>Streptococcaceae</taxon>
        <taxon>Streptococcus</taxon>
    </lineage>
</organism>
<feature type="initiator methionine" description="Removed" evidence="1">
    <location>
        <position position="1"/>
    </location>
</feature>
<feature type="chain" id="PRO_0000145705" description="Glyceraldehyde-3-phosphate dehydrogenase">
    <location>
        <begin position="2"/>
        <end position="336"/>
    </location>
</feature>
<feature type="active site" description="Nucleophile" evidence="2">
    <location>
        <position position="152"/>
    </location>
</feature>
<feature type="binding site" evidence="2">
    <location>
        <begin position="12"/>
        <end position="13"/>
    </location>
    <ligand>
        <name>NAD(+)</name>
        <dbReference type="ChEBI" id="CHEBI:57540"/>
    </ligand>
</feature>
<feature type="binding site" evidence="2">
    <location>
        <position position="34"/>
    </location>
    <ligand>
        <name>NAD(+)</name>
        <dbReference type="ChEBI" id="CHEBI:57540"/>
    </ligand>
</feature>
<feature type="binding site" evidence="2">
    <location>
        <position position="78"/>
    </location>
    <ligand>
        <name>NAD(+)</name>
        <dbReference type="ChEBI" id="CHEBI:57540"/>
    </ligand>
</feature>
<feature type="binding site" evidence="2">
    <location>
        <position position="121"/>
    </location>
    <ligand>
        <name>NAD(+)</name>
        <dbReference type="ChEBI" id="CHEBI:57540"/>
    </ligand>
</feature>
<feature type="binding site" evidence="2">
    <location>
        <begin position="151"/>
        <end position="153"/>
    </location>
    <ligand>
        <name>D-glyceraldehyde 3-phosphate</name>
        <dbReference type="ChEBI" id="CHEBI:59776"/>
    </ligand>
</feature>
<feature type="binding site" evidence="2">
    <location>
        <position position="182"/>
    </location>
    <ligand>
        <name>D-glyceraldehyde 3-phosphate</name>
        <dbReference type="ChEBI" id="CHEBI:59776"/>
    </ligand>
</feature>
<feature type="binding site" evidence="2">
    <location>
        <position position="199"/>
    </location>
    <ligand>
        <name>D-glyceraldehyde 3-phosphate</name>
        <dbReference type="ChEBI" id="CHEBI:59776"/>
    </ligand>
</feature>
<feature type="binding site" evidence="2">
    <location>
        <begin position="212"/>
        <end position="213"/>
    </location>
    <ligand>
        <name>D-glyceraldehyde 3-phosphate</name>
        <dbReference type="ChEBI" id="CHEBI:59776"/>
    </ligand>
</feature>
<feature type="binding site" evidence="2">
    <location>
        <position position="235"/>
    </location>
    <ligand>
        <name>D-glyceraldehyde 3-phosphate</name>
        <dbReference type="ChEBI" id="CHEBI:59776"/>
    </ligand>
</feature>
<feature type="binding site" evidence="2">
    <location>
        <position position="316"/>
    </location>
    <ligand>
        <name>NAD(+)</name>
        <dbReference type="ChEBI" id="CHEBI:57540"/>
    </ligand>
</feature>
<feature type="site" description="Activates thiol group during catalysis" evidence="4">
    <location>
        <position position="179"/>
    </location>
</feature>
<evidence type="ECO:0000250" key="1"/>
<evidence type="ECO:0000250" key="2">
    <source>
        <dbReference type="UniProtKB" id="P00362"/>
    </source>
</evidence>
<evidence type="ECO:0000250" key="3">
    <source>
        <dbReference type="UniProtKB" id="P09124"/>
    </source>
</evidence>
<evidence type="ECO:0000250" key="4">
    <source>
        <dbReference type="UniProtKB" id="Q6GIL8"/>
    </source>
</evidence>
<evidence type="ECO:0000269" key="5">
    <source>
    </source>
</evidence>
<evidence type="ECO:0000303" key="6">
    <source>
    </source>
</evidence>
<evidence type="ECO:0000305" key="7"/>
<proteinExistence type="inferred from homology"/>
<accession>P0DB18</accession>
<accession>Q8K8M9</accession>
<reference key="1">
    <citation type="journal article" date="2002" name="Proc. Natl. Acad. Sci. U.S.A.">
        <title>Genome sequence of a serotype M3 strain of group A Streptococcus: phage-encoded toxins, the high-virulence phenotype, and clone emergence.</title>
        <authorList>
            <person name="Beres S.B."/>
            <person name="Sylva G.L."/>
            <person name="Barbian K.D."/>
            <person name="Lei B."/>
            <person name="Hoff J.S."/>
            <person name="Mammarella N.D."/>
            <person name="Liu M.-Y."/>
            <person name="Smoot J.C."/>
            <person name="Porcella S.F."/>
            <person name="Parkins L.D."/>
            <person name="Campbell D.S."/>
            <person name="Smith T.M."/>
            <person name="McCormick J.K."/>
            <person name="Leung D.Y.M."/>
            <person name="Schlievert P.M."/>
            <person name="Musser J.M."/>
        </authorList>
    </citation>
    <scope>NUCLEOTIDE SEQUENCE [LARGE SCALE GENOMIC DNA]</scope>
    <source>
        <strain>ATCC BAA-595 / MGAS315</strain>
    </source>
</reference>
<sequence length="336" mass="35973">MVVKVGINGFGRIGRLAFRRIQNIEGVEVTRINDLTDPNMLAHLLKYDTTQGRFDGTVEVKEGGFEVNGNFIKVSAERDPENIDWATDGVEIVLEATGFFAKKEAAEKHLHTNGAKKVVITAPGGNDVKTVVFNTNHDILDGTETVISGASCTTNCLAPMAKALHDAFGIQKGLMTTIHAYTGDQMILDGPHRGGDLRRARAGAANIVPNSTGAAKAIGLVIPELNGKLDGAAQRVPVPTGSVTELVVTLDKNVSVDEINAAMKAASNDSFGYTEDPIVSSDIVGVSYGSLFDATQTKVMEVDGSQLVKVVSWYDNEMSYTAQLVRTLEYFAKIAK</sequence>
<dbReference type="EC" id="1.2.1.12" evidence="3"/>
<dbReference type="EMBL" id="AE014074">
    <property type="protein sequence ID" value="AAM78808.1"/>
    <property type="molecule type" value="Genomic_DNA"/>
</dbReference>
<dbReference type="RefSeq" id="WP_011054177.1">
    <property type="nucleotide sequence ID" value="NC_004070.1"/>
</dbReference>
<dbReference type="SMR" id="P0DB18"/>
<dbReference type="KEGG" id="spg:SpyM3_0201"/>
<dbReference type="HOGENOM" id="CLU_030140_0_3_9"/>
<dbReference type="UniPathway" id="UPA00109">
    <property type="reaction ID" value="UER00184"/>
</dbReference>
<dbReference type="Proteomes" id="UP000000564">
    <property type="component" value="Chromosome"/>
</dbReference>
<dbReference type="GO" id="GO:0005737">
    <property type="term" value="C:cytoplasm"/>
    <property type="evidence" value="ECO:0007669"/>
    <property type="project" value="UniProtKB-SubCell"/>
</dbReference>
<dbReference type="GO" id="GO:0004365">
    <property type="term" value="F:glyceraldehyde-3-phosphate dehydrogenase (NAD+) (phosphorylating) activity"/>
    <property type="evidence" value="ECO:0000250"/>
    <property type="project" value="UniProtKB"/>
</dbReference>
<dbReference type="GO" id="GO:0051287">
    <property type="term" value="F:NAD binding"/>
    <property type="evidence" value="ECO:0000250"/>
    <property type="project" value="UniProtKB"/>
</dbReference>
<dbReference type="GO" id="GO:0050661">
    <property type="term" value="F:NADP binding"/>
    <property type="evidence" value="ECO:0007669"/>
    <property type="project" value="InterPro"/>
</dbReference>
<dbReference type="GO" id="GO:0006006">
    <property type="term" value="P:glucose metabolic process"/>
    <property type="evidence" value="ECO:0007669"/>
    <property type="project" value="InterPro"/>
</dbReference>
<dbReference type="GO" id="GO:0006096">
    <property type="term" value="P:glycolytic process"/>
    <property type="evidence" value="ECO:0007669"/>
    <property type="project" value="UniProtKB-UniPathway"/>
</dbReference>
<dbReference type="CDD" id="cd18126">
    <property type="entry name" value="GAPDH_I_C"/>
    <property type="match status" value="1"/>
</dbReference>
<dbReference type="CDD" id="cd05214">
    <property type="entry name" value="GAPDH_I_N"/>
    <property type="match status" value="1"/>
</dbReference>
<dbReference type="FunFam" id="3.30.360.10:FF:000002">
    <property type="entry name" value="Glyceraldehyde-3-phosphate dehydrogenase"/>
    <property type="match status" value="1"/>
</dbReference>
<dbReference type="FunFam" id="3.40.50.720:FF:000001">
    <property type="entry name" value="Glyceraldehyde-3-phosphate dehydrogenase"/>
    <property type="match status" value="1"/>
</dbReference>
<dbReference type="Gene3D" id="3.30.360.10">
    <property type="entry name" value="Dihydrodipicolinate Reductase, domain 2"/>
    <property type="match status" value="1"/>
</dbReference>
<dbReference type="Gene3D" id="3.40.50.720">
    <property type="entry name" value="NAD(P)-binding Rossmann-like Domain"/>
    <property type="match status" value="1"/>
</dbReference>
<dbReference type="InterPro" id="IPR020831">
    <property type="entry name" value="GlycerAld/Erythrose_P_DH"/>
</dbReference>
<dbReference type="InterPro" id="IPR020830">
    <property type="entry name" value="GlycerAld_3-P_DH_AS"/>
</dbReference>
<dbReference type="InterPro" id="IPR020829">
    <property type="entry name" value="GlycerAld_3-P_DH_cat"/>
</dbReference>
<dbReference type="InterPro" id="IPR020828">
    <property type="entry name" value="GlycerAld_3-P_DH_NAD(P)-bd"/>
</dbReference>
<dbReference type="InterPro" id="IPR006424">
    <property type="entry name" value="Glyceraldehyde-3-P_DH_1"/>
</dbReference>
<dbReference type="InterPro" id="IPR036291">
    <property type="entry name" value="NAD(P)-bd_dom_sf"/>
</dbReference>
<dbReference type="NCBIfam" id="TIGR01534">
    <property type="entry name" value="GAPDH-I"/>
    <property type="match status" value="1"/>
</dbReference>
<dbReference type="PANTHER" id="PTHR43148">
    <property type="entry name" value="GLYCERALDEHYDE-3-PHOSPHATE DEHYDROGENASE 2"/>
    <property type="match status" value="1"/>
</dbReference>
<dbReference type="Pfam" id="PF02800">
    <property type="entry name" value="Gp_dh_C"/>
    <property type="match status" value="1"/>
</dbReference>
<dbReference type="Pfam" id="PF00044">
    <property type="entry name" value="Gp_dh_N"/>
    <property type="match status" value="1"/>
</dbReference>
<dbReference type="PIRSF" id="PIRSF000149">
    <property type="entry name" value="GAP_DH"/>
    <property type="match status" value="1"/>
</dbReference>
<dbReference type="PRINTS" id="PR00078">
    <property type="entry name" value="G3PDHDRGNASE"/>
</dbReference>
<dbReference type="SMART" id="SM00846">
    <property type="entry name" value="Gp_dh_N"/>
    <property type="match status" value="1"/>
</dbReference>
<dbReference type="SUPFAM" id="SSF55347">
    <property type="entry name" value="Glyceraldehyde-3-phosphate dehydrogenase-like, C-terminal domain"/>
    <property type="match status" value="1"/>
</dbReference>
<dbReference type="SUPFAM" id="SSF51735">
    <property type="entry name" value="NAD(P)-binding Rossmann-fold domains"/>
    <property type="match status" value="1"/>
</dbReference>
<dbReference type="PROSITE" id="PS00071">
    <property type="entry name" value="GAPDH"/>
    <property type="match status" value="1"/>
</dbReference>
<comment type="function">
    <text evidence="2">Catalyzes the oxidative phosphorylation of glyceraldehyde 3-phosphate (G3P) to 1,3-bisphosphoglycerate (BPG) using the cofactor NAD. The first reaction step involves the formation of a hemiacetal intermediate between G3P and a cysteine residue, and this hemiacetal intermediate is then oxidized to a thioester, with concomitant reduction of NAD to NADH. The reduced NADH is then exchanged with the second NAD, and the thioester is attacked by a nucleophilic inorganic phosphate to produce BPG.</text>
</comment>
<comment type="catalytic activity">
    <reaction evidence="3">
        <text>D-glyceraldehyde 3-phosphate + phosphate + NAD(+) = (2R)-3-phospho-glyceroyl phosphate + NADH + H(+)</text>
        <dbReference type="Rhea" id="RHEA:10300"/>
        <dbReference type="ChEBI" id="CHEBI:15378"/>
        <dbReference type="ChEBI" id="CHEBI:43474"/>
        <dbReference type="ChEBI" id="CHEBI:57540"/>
        <dbReference type="ChEBI" id="CHEBI:57604"/>
        <dbReference type="ChEBI" id="CHEBI:57945"/>
        <dbReference type="ChEBI" id="CHEBI:59776"/>
        <dbReference type="EC" id="1.2.1.12"/>
    </reaction>
</comment>
<comment type="pathway">
    <text evidence="7">Carbohydrate degradation; glycolysis; pyruvate from D-glyceraldehyde 3-phosphate: step 1/5.</text>
</comment>
<comment type="subunit">
    <text evidence="2">Homotetramer.</text>
</comment>
<comment type="subcellular location">
    <subcellularLocation>
        <location evidence="7">Cytoplasm</location>
    </subcellularLocation>
</comment>
<comment type="miscellaneous">
    <text evidence="5">Binds human plasminogen.</text>
</comment>
<comment type="similarity">
    <text evidence="7">Belongs to the glyceraldehyde-3-phosphate dehydrogenase family.</text>
</comment>
<protein>
    <recommendedName>
        <fullName evidence="2">Glyceraldehyde-3-phosphate dehydrogenase</fullName>
        <shortName evidence="2">GAPDH</shortName>
        <ecNumber evidence="3">1.2.1.12</ecNumber>
    </recommendedName>
    <alternativeName>
        <fullName evidence="2">NAD-dependent glyceraldehyde-3-phosphate dehydrogenase</fullName>
    </alternativeName>
    <alternativeName>
        <fullName evidence="6">Plasmin receptor</fullName>
    </alternativeName>
    <alternativeName>
        <fullName evidence="6">Plasminogen-binding protein</fullName>
    </alternativeName>
</protein>